<protein>
    <recommendedName>
        <fullName evidence="1">UPF0145 protein Spro_1658</fullName>
    </recommendedName>
</protein>
<comment type="similarity">
    <text evidence="1">Belongs to the UPF0145 family.</text>
</comment>
<reference key="1">
    <citation type="submission" date="2007-09" db="EMBL/GenBank/DDBJ databases">
        <title>Complete sequence of chromosome of Serratia proteamaculans 568.</title>
        <authorList>
            <consortium name="US DOE Joint Genome Institute"/>
            <person name="Copeland A."/>
            <person name="Lucas S."/>
            <person name="Lapidus A."/>
            <person name="Barry K."/>
            <person name="Glavina del Rio T."/>
            <person name="Dalin E."/>
            <person name="Tice H."/>
            <person name="Pitluck S."/>
            <person name="Chain P."/>
            <person name="Malfatti S."/>
            <person name="Shin M."/>
            <person name="Vergez L."/>
            <person name="Schmutz J."/>
            <person name="Larimer F."/>
            <person name="Land M."/>
            <person name="Hauser L."/>
            <person name="Kyrpides N."/>
            <person name="Kim E."/>
            <person name="Taghavi S."/>
            <person name="Newman L."/>
            <person name="Vangronsveld J."/>
            <person name="van der Lelie D."/>
            <person name="Richardson P."/>
        </authorList>
    </citation>
    <scope>NUCLEOTIDE SEQUENCE [LARGE SCALE GENOMIC DNA]</scope>
    <source>
        <strain>568</strain>
    </source>
</reference>
<organism>
    <name type="scientific">Serratia proteamaculans (strain 568)</name>
    <dbReference type="NCBI Taxonomy" id="399741"/>
    <lineage>
        <taxon>Bacteria</taxon>
        <taxon>Pseudomonadati</taxon>
        <taxon>Pseudomonadota</taxon>
        <taxon>Gammaproteobacteria</taxon>
        <taxon>Enterobacterales</taxon>
        <taxon>Yersiniaceae</taxon>
        <taxon>Serratia</taxon>
    </lineage>
</organism>
<evidence type="ECO:0000255" key="1">
    <source>
        <dbReference type="HAMAP-Rule" id="MF_00338"/>
    </source>
</evidence>
<sequence>MQLSTTPTLEGFTITEYCGVVTGEAILGANIFRDFFAGVRDIVGGRSGAYEKELRKARLIAFKELEEQAKELGANAVVGIDIDYETVGKDSSMLMVTVSGTAVKVSR</sequence>
<proteinExistence type="inferred from homology"/>
<feature type="chain" id="PRO_1000059732" description="UPF0145 protein Spro_1658">
    <location>
        <begin position="1"/>
        <end position="107"/>
    </location>
</feature>
<gene>
    <name type="ordered locus">Spro_1658</name>
</gene>
<name>Y1658_SERP5</name>
<dbReference type="EMBL" id="CP000826">
    <property type="protein sequence ID" value="ABV40762.1"/>
    <property type="molecule type" value="Genomic_DNA"/>
</dbReference>
<dbReference type="SMR" id="A8GCC2"/>
<dbReference type="STRING" id="399741.Spro_1658"/>
<dbReference type="KEGG" id="spe:Spro_1658"/>
<dbReference type="eggNOG" id="COG0393">
    <property type="taxonomic scope" value="Bacteria"/>
</dbReference>
<dbReference type="HOGENOM" id="CLU_117144_3_2_6"/>
<dbReference type="OrthoDB" id="9796448at2"/>
<dbReference type="Gene3D" id="3.30.110.70">
    <property type="entry name" value="Hypothetical protein apc22750. Chain B"/>
    <property type="match status" value="1"/>
</dbReference>
<dbReference type="HAMAP" id="MF_00338">
    <property type="entry name" value="UPF0145"/>
    <property type="match status" value="1"/>
</dbReference>
<dbReference type="InterPro" id="IPR035439">
    <property type="entry name" value="UPF0145_dom_sf"/>
</dbReference>
<dbReference type="InterPro" id="IPR002765">
    <property type="entry name" value="UPF0145_YbjQ-like"/>
</dbReference>
<dbReference type="NCBIfam" id="NF002776">
    <property type="entry name" value="PRK02877.1"/>
    <property type="match status" value="1"/>
</dbReference>
<dbReference type="PANTHER" id="PTHR34068">
    <property type="entry name" value="UPF0145 PROTEIN YBJQ"/>
    <property type="match status" value="1"/>
</dbReference>
<dbReference type="PANTHER" id="PTHR34068:SF1">
    <property type="entry name" value="UPF0145 PROTEIN YBJQ"/>
    <property type="match status" value="1"/>
</dbReference>
<dbReference type="Pfam" id="PF01906">
    <property type="entry name" value="YbjQ_1"/>
    <property type="match status" value="1"/>
</dbReference>
<dbReference type="SUPFAM" id="SSF117782">
    <property type="entry name" value="YbjQ-like"/>
    <property type="match status" value="1"/>
</dbReference>
<accession>A8GCC2</accession>